<protein>
    <recommendedName>
        <fullName>Monensin-resistant homolog 2</fullName>
    </recommendedName>
</protein>
<keyword id="KW-0025">Alternative splicing</keyword>
<keyword id="KW-0333">Golgi apparatus</keyword>
<keyword id="KW-0653">Protein transport</keyword>
<keyword id="KW-1185">Reference proteome</keyword>
<keyword id="KW-0813">Transport</keyword>
<reference key="1">
    <citation type="journal article" date="1998" name="Science">
        <title>Genome sequence of the nematode C. elegans: a platform for investigating biology.</title>
        <authorList>
            <consortium name="The C. elegans sequencing consortium"/>
        </authorList>
    </citation>
    <scope>NUCLEOTIDE SEQUENCE [LARGE SCALE GENOMIC DNA]</scope>
    <scope>ALTERNATIVE SPLICING</scope>
    <source>
        <strain>Bristol N2</strain>
    </source>
</reference>
<reference key="2">
    <citation type="journal article" date="2005" name="J. Cell Sci.">
        <title>Yeast Mon2p is a highly conserved protein that functions in the cytoplasm-to-vacuole transport pathway and is required for Golgi homeostasis.</title>
        <authorList>
            <person name="Efe J.A."/>
            <person name="Plattner F."/>
            <person name="Hulo N."/>
            <person name="Kressler D."/>
            <person name="Emr S.D."/>
            <person name="Deloche O."/>
        </authorList>
    </citation>
    <scope>IDENTIFICATION</scope>
</reference>
<reference key="3">
    <citation type="journal article" date="2008" name="EMBO J.">
        <title>Beta-catenin asymmetry is regulated by PLA1 and retrograde traffic in C. elegans stem cell divisions.</title>
        <authorList>
            <person name="Kanamori T."/>
            <person name="Inoue T."/>
            <person name="Sakamoto T."/>
            <person name="Gengyo-Ando K."/>
            <person name="Tsujimoto M."/>
            <person name="Mitani S."/>
            <person name="Sawa H."/>
            <person name="Aoki J."/>
            <person name="Arai H."/>
        </authorList>
    </citation>
    <scope>POSSIBLE FUNCTION</scope>
</reference>
<organism>
    <name type="scientific">Caenorhabditis elegans</name>
    <dbReference type="NCBI Taxonomy" id="6239"/>
    <lineage>
        <taxon>Eukaryota</taxon>
        <taxon>Metazoa</taxon>
        <taxon>Ecdysozoa</taxon>
        <taxon>Nematoda</taxon>
        <taxon>Chromadorea</taxon>
        <taxon>Rhabditida</taxon>
        <taxon>Rhabditina</taxon>
        <taxon>Rhabditomorpha</taxon>
        <taxon>Rhabditoidea</taxon>
        <taxon>Rhabditidae</taxon>
        <taxon>Peloderinae</taxon>
        <taxon>Caenorhabditis</taxon>
    </lineage>
</organism>
<proteinExistence type="inferred from homology"/>
<dbReference type="EMBL" id="Z68297">
    <property type="protein sequence ID" value="CAA92597.1"/>
    <property type="molecule type" value="Genomic_DNA"/>
</dbReference>
<dbReference type="EMBL" id="Z68507">
    <property type="protein sequence ID" value="CAA92597.1"/>
    <property type="status" value="JOINED"/>
    <property type="molecule type" value="Genomic_DNA"/>
</dbReference>
<dbReference type="EMBL" id="Z68297">
    <property type="protein sequence ID" value="CCD31054.1"/>
    <property type="molecule type" value="Genomic_DNA"/>
</dbReference>
<dbReference type="EMBL" id="Z68507">
    <property type="protein sequence ID" value="CCD31054.1"/>
    <property type="status" value="JOINED"/>
    <property type="molecule type" value="Genomic_DNA"/>
</dbReference>
<dbReference type="PIR" id="T20740">
    <property type="entry name" value="T20740"/>
</dbReference>
<dbReference type="RefSeq" id="NP_001255622.1">
    <molecule id="Q19338-1"/>
    <property type="nucleotide sequence ID" value="NM_001268693.3"/>
</dbReference>
<dbReference type="RefSeq" id="NP_001255623.1">
    <molecule id="Q19338-2"/>
    <property type="nucleotide sequence ID" value="NM_001268694.2"/>
</dbReference>
<dbReference type="SMR" id="Q19338"/>
<dbReference type="BioGRID" id="43246">
    <property type="interactions" value="2"/>
</dbReference>
<dbReference type="FunCoup" id="Q19338">
    <property type="interactions" value="3017"/>
</dbReference>
<dbReference type="STRING" id="6239.F11A10.4b.1"/>
<dbReference type="PaxDb" id="6239-F11A10.4b"/>
<dbReference type="PeptideAtlas" id="Q19338"/>
<dbReference type="EnsemblMetazoa" id="F11A10.4a.1">
    <molecule id="Q19338-1"/>
    <property type="protein sequence ID" value="F11A10.4a.1"/>
    <property type="gene ID" value="WBGene00008685"/>
</dbReference>
<dbReference type="EnsemblMetazoa" id="F11A10.4b.1">
    <molecule id="Q19338-2"/>
    <property type="protein sequence ID" value="F11A10.4b.1"/>
    <property type="gene ID" value="WBGene00008685"/>
</dbReference>
<dbReference type="GeneID" id="178153"/>
<dbReference type="KEGG" id="cel:CELE_F11A10.4"/>
<dbReference type="UCSC" id="F11A10.4">
    <molecule id="Q19338-1"/>
    <property type="organism name" value="c. elegans"/>
</dbReference>
<dbReference type="AGR" id="WB:WBGene00008685"/>
<dbReference type="CTD" id="178153"/>
<dbReference type="WormBase" id="F11A10.4a">
    <molecule id="Q19338-1"/>
    <property type="protein sequence ID" value="CE17656"/>
    <property type="gene ID" value="WBGene00008685"/>
    <property type="gene designation" value="mon-2"/>
</dbReference>
<dbReference type="WormBase" id="F11A10.4b">
    <molecule id="Q19338-2"/>
    <property type="protein sequence ID" value="CE46488"/>
    <property type="gene ID" value="WBGene00008685"/>
    <property type="gene designation" value="mon-2"/>
</dbReference>
<dbReference type="eggNOG" id="KOG1848">
    <property type="taxonomic scope" value="Eukaryota"/>
</dbReference>
<dbReference type="GeneTree" id="ENSGT00940000174858"/>
<dbReference type="HOGENOM" id="CLU_001169_2_0_1"/>
<dbReference type="InParanoid" id="Q19338"/>
<dbReference type="OMA" id="AWRLCLN"/>
<dbReference type="OrthoDB" id="294853at2759"/>
<dbReference type="PhylomeDB" id="Q19338"/>
<dbReference type="PRO" id="PR:Q19338"/>
<dbReference type="Proteomes" id="UP000001940">
    <property type="component" value="Chromosome IV"/>
</dbReference>
<dbReference type="Bgee" id="WBGene00008685">
    <property type="expression patterns" value="Expressed in germ line (C elegans) and 4 other cell types or tissues"/>
</dbReference>
<dbReference type="GO" id="GO:0005794">
    <property type="term" value="C:Golgi apparatus"/>
    <property type="evidence" value="ECO:0007669"/>
    <property type="project" value="UniProtKB-SubCell"/>
</dbReference>
<dbReference type="GO" id="GO:0015031">
    <property type="term" value="P:protein transport"/>
    <property type="evidence" value="ECO:0007669"/>
    <property type="project" value="UniProtKB-KW"/>
</dbReference>
<dbReference type="InterPro" id="IPR016024">
    <property type="entry name" value="ARM-type_fold"/>
</dbReference>
<dbReference type="InterPro" id="IPR032629">
    <property type="entry name" value="DCB_dom"/>
</dbReference>
<dbReference type="InterPro" id="IPR032691">
    <property type="entry name" value="Mon2/Sec7/BIG1-like_HUS"/>
</dbReference>
<dbReference type="InterPro" id="IPR032817">
    <property type="entry name" value="Mon2_C"/>
</dbReference>
<dbReference type="PANTHER" id="PTHR10663">
    <property type="entry name" value="GUANYL-NUCLEOTIDE EXCHANGE FACTOR"/>
    <property type="match status" value="1"/>
</dbReference>
<dbReference type="PANTHER" id="PTHR10663:SF333">
    <property type="entry name" value="PROTEIN MON2 HOMOLOG"/>
    <property type="match status" value="1"/>
</dbReference>
<dbReference type="Pfam" id="PF16213">
    <property type="entry name" value="DCB"/>
    <property type="match status" value="1"/>
</dbReference>
<dbReference type="Pfam" id="PF16206">
    <property type="entry name" value="Mon2_C"/>
    <property type="match status" value="3"/>
</dbReference>
<dbReference type="Pfam" id="PF12783">
    <property type="entry name" value="Sec7-like_HUS"/>
    <property type="match status" value="2"/>
</dbReference>
<dbReference type="SUPFAM" id="SSF48371">
    <property type="entry name" value="ARM repeat"/>
    <property type="match status" value="1"/>
</dbReference>
<gene>
    <name type="primary">mon-2</name>
    <name type="ORF">F11A10.4</name>
</gene>
<name>MON2_CAEEL</name>
<comment type="function">
    <text>May be required for traffic between late Golgi and early endosomes.</text>
</comment>
<comment type="subcellular location">
    <subcellularLocation>
        <location evidence="1">Golgi apparatus</location>
    </subcellularLocation>
</comment>
<comment type="alternative products">
    <event type="alternative splicing"/>
    <isoform>
        <id>Q19338-1</id>
        <name>a</name>
        <sequence type="displayed"/>
    </isoform>
    <isoform>
        <id>Q19338-2</id>
        <name>b</name>
        <sequence type="described" ref="VSP_043941"/>
    </isoform>
</comment>
<comment type="similarity">
    <text evidence="1">Belongs to the MON2 family.</text>
</comment>
<feature type="chain" id="PRO_0000297906" description="Monensin-resistant homolog 2">
    <location>
        <begin position="1"/>
        <end position="1646"/>
    </location>
</feature>
<feature type="splice variant" id="VSP_043941" description="In isoform b." evidence="1">
    <original>L</original>
    <variation>LAS</variation>
    <location>
        <position position="1497"/>
    </location>
</feature>
<accession>Q19338</accession>
<accession>G5EBK9</accession>
<accession>Q21561</accession>
<sequence>MSINAVDSKKLVEALLGDLRLLSQEAKKKQNHVKEAAESGVVRIRNISTASVGDTVLITNLRAACTELLHPLVLSCETRHTRLVQIALQGIQRLVQHRILSQNGATIVTNELWSLVEAECEELRVLQTVPPLVSSELIVTGNTLAKCIVMCFRLHFAKDPIVINAASAAVRQLVSTVFERVIQEDGIFSTELTVVNPSGGRPSPRAAPPTLRPCAADAYMLFKDLCLLINGEAPIWLVGIQETTRTLGLELLESLLKGFPSVFIRHTEFGDLLKDDVCPLIIRLFSPNVKAMHISSQHPSSRTSNASFNNYPPTISHERQSFPISMRLVRIVTLIVQFYQTILHTECEIFISTLLKFVDGDRKGWQRPLALESLHRIVSSTDLVKWMTESFDCRPNSTHVLEQVAIGLSTVVQQCLVCTTFSSDQENEIDRSQEDGGPGFLSKGLWVPYVEHLTSKKTILLDSLDRMDAVAIPEGYVLSRCCVALCDMTQAVYAAIDKLCLVDENSEAGSSETKLEIAKVAYANSQPSILAAIGSLLAASTDEIVSDQLLCCLSTLISAGCRVGADADLHRSVYVLAIMSLPSPSYLNQFAGIAPPSPANKRDAPVSEQVFDLEAWPSTTQVTASGPPCPCPVVSTELWNKQVLLTSKNLQAARTFIASITTHIKELNNLWYLCMATCEHLSWLLAMRPTQVGQFERETRDDHSNVPTVVTNAALSDIAMLSSLMDKVAPAIAALPDKSFLSVIDALIRLSDESLAVAATGRESSLFPLAVLYKVCSLSLMRLQVFWQKAANHFIKVCNHTSVSMRDWAAVALTSLAKHAVKSKTSMDAKSQQEMIISSLLALCSIPHIQVRRRQLDCVMSLMQTDGAFLLSTSWPNVIQIISAIIDSDTECELSLVRQGYLGLRLVSSDFLQSIPFDCISGLVEAISRYSKQNTDQNISLSALTLLWTISDFIYRKMESVGNDASEAVWMVLYTCLSESCVDSRFAVRKSACQTLLQTVTAHGHALRSAAWHSVIWQIMIPLLDKVRSQTRCASTEKSNGELIMHHSRDTEQKQWTETCIHTISAISKIFNSQRKSLLALNDFGAVWEAFLGYLDWAACYENAELSLSAIRSYQEVLLGKISSQTLNVNSHEKSNGSDSTIDAITPELPQAQWVESWKVWLRISRGLARQGCAAMANSVNADSKSISSTPRMNSSSSSLASLAPGIYVPGPSHLTAILHVFPPLFDKVAKSITVDDLKYESLPAVLESMMNVPIPSEQAPFVLPSATTHLTPTQEALLEAVKIVFVECTLSGTSLRAAIPDQIRLLLKFASMATQRISPNKVAPGGQKSYRDYALTTIVPFSEYSLRIAIEFFTSTSQNPEVANSLIAIDIIKFLGEPLYMKYTCISASTWKLAATSLMSVLRTSIPYARQNPEVFRGLWSAICDTMERWLFTPNKSTRLAADERKRDELMECQAIEIIRSEMLAYASRLPQEDVQRLIALLHRGSISQIDSTDVLDSHTQRNELAKACFDALLMSSDGAHTNTEEDEGRGILGNVAVTSLLQRCTQVMSDFCKDWSAAGDLRLPRSRILEIISALQAVDSLIARLARDPKMTELYSHLVSLFPSVVDVMPCCHADPQLEHQLIKTIKSYQTLFLLQNIPQATVE</sequence>
<evidence type="ECO:0000305" key="1"/>